<protein>
    <recommendedName>
        <fullName evidence="1">Putative carbamate hydrolase RutD</fullName>
        <ecNumber evidence="1">3.5.1.-</ecNumber>
    </recommendedName>
    <alternativeName>
        <fullName evidence="1">Aminohydrolase</fullName>
    </alternativeName>
</protein>
<reference key="1">
    <citation type="journal article" date="2010" name="J. Bacteriol.">
        <title>The genetic basis of laboratory adaptation in Caulobacter crescentus.</title>
        <authorList>
            <person name="Marks M.E."/>
            <person name="Castro-Rojas C.M."/>
            <person name="Teiling C."/>
            <person name="Du L."/>
            <person name="Kapatral V."/>
            <person name="Walunas T.L."/>
            <person name="Crosson S."/>
        </authorList>
    </citation>
    <scope>NUCLEOTIDE SEQUENCE [LARGE SCALE GENOMIC DNA]</scope>
    <source>
        <strain>NA1000 / CB15N</strain>
    </source>
</reference>
<sequence length="269" mass="29553">MRRMTIGTVDGLHYELHGGPIAGREVVLLSSGLGGSGAFWAPQMQALTQRWPVVTYDHRGTGRSVRELPPRYTLAHMADDMVKVMDALGLAKAHVVGHAAGGNAGLQLALDHPDRLAKLVVVNGWSRPDPHIRRCFDTRLHLLNDTGPEAYVHAQPIFLYPADWISRNHTRLMAEEAHHVAAFPPREVMLARINALLAFDIDARLEDITHRVLISASADDMLVPMSCSQRLAGRLPNADFQQVAWGGHGFTVTDPETFNEALVSFLEGA</sequence>
<organism>
    <name type="scientific">Caulobacter vibrioides (strain NA1000 / CB15N)</name>
    <name type="common">Caulobacter crescentus</name>
    <dbReference type="NCBI Taxonomy" id="565050"/>
    <lineage>
        <taxon>Bacteria</taxon>
        <taxon>Pseudomonadati</taxon>
        <taxon>Pseudomonadota</taxon>
        <taxon>Alphaproteobacteria</taxon>
        <taxon>Caulobacterales</taxon>
        <taxon>Caulobacteraceae</taxon>
        <taxon>Caulobacter</taxon>
    </lineage>
</organism>
<feature type="chain" id="PRO_0000402929" description="Putative carbamate hydrolase RutD">
    <location>
        <begin position="1"/>
        <end position="269"/>
    </location>
</feature>
<feature type="domain" description="AB hydrolase-1" evidence="1">
    <location>
        <begin position="26"/>
        <end position="144"/>
    </location>
</feature>
<keyword id="KW-0378">Hydrolase</keyword>
<keyword id="KW-1185">Reference proteome</keyword>
<proteinExistence type="inferred from homology"/>
<comment type="function">
    <text evidence="1">Involved in pyrimidine catabolism. May facilitate the hydrolysis of carbamate, a reaction that can also occur spontaneously.</text>
</comment>
<comment type="catalytic activity">
    <reaction evidence="1">
        <text>carbamate + 2 H(+) = NH4(+) + CO2</text>
        <dbReference type="Rhea" id="RHEA:15649"/>
        <dbReference type="ChEBI" id="CHEBI:13941"/>
        <dbReference type="ChEBI" id="CHEBI:15378"/>
        <dbReference type="ChEBI" id="CHEBI:16526"/>
        <dbReference type="ChEBI" id="CHEBI:28938"/>
    </reaction>
</comment>
<comment type="similarity">
    <text evidence="1">Belongs to the AB hydrolase superfamily. Hydrolase RutD family.</text>
</comment>
<evidence type="ECO:0000255" key="1">
    <source>
        <dbReference type="HAMAP-Rule" id="MF_00832"/>
    </source>
</evidence>
<dbReference type="EC" id="3.5.1.-" evidence="1"/>
<dbReference type="EMBL" id="CP001340">
    <property type="protein sequence ID" value="ACL96352.1"/>
    <property type="molecule type" value="Genomic_DNA"/>
</dbReference>
<dbReference type="RefSeq" id="WP_010920638.1">
    <property type="nucleotide sequence ID" value="NC_011916.1"/>
</dbReference>
<dbReference type="RefSeq" id="YP_002518260.1">
    <property type="nucleotide sequence ID" value="NC_011916.1"/>
</dbReference>
<dbReference type="SMR" id="B8H1Q3"/>
<dbReference type="ESTHER" id="caucr-CC2797">
    <property type="family name" value="RutD"/>
</dbReference>
<dbReference type="GeneID" id="7331317"/>
<dbReference type="KEGG" id="ccs:CCNA_02887"/>
<dbReference type="PATRIC" id="fig|565050.3.peg.2817"/>
<dbReference type="HOGENOM" id="CLU_020336_50_1_5"/>
<dbReference type="OrthoDB" id="9801400at2"/>
<dbReference type="PhylomeDB" id="B8H1Q3"/>
<dbReference type="Proteomes" id="UP000001364">
    <property type="component" value="Chromosome"/>
</dbReference>
<dbReference type="GO" id="GO:0016811">
    <property type="term" value="F:hydrolase activity, acting on carbon-nitrogen (but not peptide) bonds, in linear amides"/>
    <property type="evidence" value="ECO:0007669"/>
    <property type="project" value="InterPro"/>
</dbReference>
<dbReference type="GO" id="GO:0019740">
    <property type="term" value="P:nitrogen utilization"/>
    <property type="evidence" value="ECO:0007669"/>
    <property type="project" value="UniProtKB-UniRule"/>
</dbReference>
<dbReference type="GO" id="GO:0006212">
    <property type="term" value="P:uracil catabolic process"/>
    <property type="evidence" value="ECO:0007669"/>
    <property type="project" value="UniProtKB-UniRule"/>
</dbReference>
<dbReference type="Gene3D" id="3.40.50.1820">
    <property type="entry name" value="alpha/beta hydrolase"/>
    <property type="match status" value="1"/>
</dbReference>
<dbReference type="HAMAP" id="MF_00832">
    <property type="entry name" value="RutD"/>
    <property type="match status" value="1"/>
</dbReference>
<dbReference type="InterPro" id="IPR050471">
    <property type="entry name" value="AB_hydrolase"/>
</dbReference>
<dbReference type="InterPro" id="IPR000073">
    <property type="entry name" value="AB_hydrolase_1"/>
</dbReference>
<dbReference type="InterPro" id="IPR029058">
    <property type="entry name" value="AB_hydrolase_fold"/>
</dbReference>
<dbReference type="InterPro" id="IPR019913">
    <property type="entry name" value="Pyrimidine_utilisation_RutD"/>
</dbReference>
<dbReference type="NCBIfam" id="TIGR03611">
    <property type="entry name" value="RutD"/>
    <property type="match status" value="1"/>
</dbReference>
<dbReference type="PANTHER" id="PTHR43433:SF5">
    <property type="entry name" value="AB HYDROLASE-1 DOMAIN-CONTAINING PROTEIN"/>
    <property type="match status" value="1"/>
</dbReference>
<dbReference type="PANTHER" id="PTHR43433">
    <property type="entry name" value="HYDROLASE, ALPHA/BETA FOLD FAMILY PROTEIN"/>
    <property type="match status" value="1"/>
</dbReference>
<dbReference type="Pfam" id="PF00561">
    <property type="entry name" value="Abhydrolase_1"/>
    <property type="match status" value="1"/>
</dbReference>
<dbReference type="PRINTS" id="PR00111">
    <property type="entry name" value="ABHYDROLASE"/>
</dbReference>
<dbReference type="SUPFAM" id="SSF53474">
    <property type="entry name" value="alpha/beta-Hydrolases"/>
    <property type="match status" value="1"/>
</dbReference>
<accession>B8H1Q3</accession>
<gene>
    <name evidence="1" type="primary">rutD</name>
    <name type="ordered locus">CCNA_02887</name>
</gene>
<name>RUTD_CAUVN</name>